<reference key="1">
    <citation type="journal article" date="1989" name="J. Biotechnol.">
        <title>The nucleotide sequence of the 2.7 kilobase pair plasmid of Zymomonas mobilis ATCC 10988.</title>
        <authorList>
            <person name="Misawa N."/>
            <person name="Nakamura K."/>
        </authorList>
    </citation>
    <scope>NUCLEOTIDE SEQUENCE [GENOMIC DNA]</scope>
    <source>
        <strain>ATCC 10988 / DSM 424 / CCUG 17860 / LMG 404 / NCIMB 8938 / NRRL B-806 / ZM1</strain>
        <plasmid>pZM2</plasmid>
    </source>
</reference>
<reference key="2">
    <citation type="journal article" date="2011" name="J. Bacteriol.">
        <title>Genome sequence of the ethanol-producing Zymomonas mobilis subsp. mobilis lectotype strain ATCC 10988.</title>
        <authorList>
            <person name="Pappas K.M."/>
            <person name="Kouvelis V.N."/>
            <person name="Saunders E."/>
            <person name="Brettin T.S."/>
            <person name="Bruce D."/>
            <person name="Detter C."/>
            <person name="Balakireva M."/>
            <person name="Han C.S."/>
            <person name="Savvakis G."/>
            <person name="Kyrpides N.C."/>
            <person name="Typas M.A."/>
        </authorList>
    </citation>
    <scope>NUCLEOTIDE SEQUENCE [LARGE SCALE GENOMIC DNA]</scope>
    <source>
        <strain>ATCC 10988 / DSM 424 / CCUG 17860 / LMG 404 / NCIMB 8938 / NRRL B-806 / ZM1</strain>
        <plasmid>pZMOBP6</plasmid>
    </source>
</reference>
<keyword id="KW-0614">Plasmid</keyword>
<organism>
    <name type="scientific">Zymomonas mobilis subsp. mobilis (strain ATCC 10988 / DSM 424 / LMG 404 / NCIMB 8938 / NRRL B-806 / ZM1)</name>
    <dbReference type="NCBI Taxonomy" id="555217"/>
    <lineage>
        <taxon>Bacteria</taxon>
        <taxon>Pseudomonadati</taxon>
        <taxon>Pseudomonadota</taxon>
        <taxon>Alphaproteobacteria</taxon>
        <taxon>Sphingomonadales</taxon>
        <taxon>Zymomonadaceae</taxon>
        <taxon>Zymomonas</taxon>
    </lineage>
</organism>
<dbReference type="EMBL" id="X14438">
    <property type="protein sequence ID" value="CAA32610.1"/>
    <property type="molecule type" value="Genomic_DNA"/>
</dbReference>
<dbReference type="EMBL" id="CP002856">
    <property type="protein sequence ID" value="AEH63660.1"/>
    <property type="molecule type" value="Genomic_DNA"/>
</dbReference>
<dbReference type="PIR" id="S06695">
    <property type="entry name" value="S06695"/>
</dbReference>
<dbReference type="RefSeq" id="WP_012209811.1">
    <property type="nucleotide sequence ID" value="NC_010021.1"/>
</dbReference>
<dbReference type="RefSeq" id="YP_001569032.1">
    <property type="nucleotide sequence ID" value="NC_010021.1"/>
</dbReference>
<dbReference type="SMR" id="P15256"/>
<dbReference type="KEGG" id="zmm:Zmob_1875"/>
<dbReference type="HOGENOM" id="CLU_110601_0_0_5"/>
<dbReference type="OrthoDB" id="7924799at2"/>
<dbReference type="Proteomes" id="UP000001494">
    <property type="component" value="Plasmid pZMOBP6"/>
</dbReference>
<dbReference type="GO" id="GO:0006260">
    <property type="term" value="P:DNA replication"/>
    <property type="evidence" value="ECO:0007669"/>
    <property type="project" value="InterPro"/>
</dbReference>
<dbReference type="GO" id="GO:0006276">
    <property type="term" value="P:plasmid maintenance"/>
    <property type="evidence" value="ECO:0007669"/>
    <property type="project" value="InterPro"/>
</dbReference>
<dbReference type="InterPro" id="IPR008813">
    <property type="entry name" value="Plasmid_replication_RepL"/>
</dbReference>
<dbReference type="Pfam" id="PF05732">
    <property type="entry name" value="RepL"/>
    <property type="match status" value="1"/>
</dbReference>
<accession>P15256</accession>
<accession>F8DXD7</accession>
<proteinExistence type="predicted"/>
<geneLocation type="plasmid">
    <name>pZM2</name>
</geneLocation>
<geneLocation type="plasmid">
    <name>pZMOBP6</name>
</geneLocation>
<protein>
    <recommendedName>
        <fullName>20.9 kDa protein</fullName>
    </recommendedName>
    <alternativeName>
        <fullName>ORF 2</fullName>
    </alternativeName>
</protein>
<sequence length="184" mass="20962">MATKLRKQPIRYDENPFIEGMVVPVKSQRVQLSRLGRDDNILVNQATGEMQGTHVTTYRRVDSEEFVKLFSTNIALTFELGAAGIKAFSVLVWILQDKGISKDLVPLDKFVLEDFLNAQEKKLALSQATFARGLAELEKAKIIAKHVRQGWYFINPNFVFNGDRVAFTTVIERKKTLQKQDESE</sequence>
<gene>
    <name type="ordered locus">Zmob_1875</name>
</gene>
<name>21KD_ZYMMA</name>
<feature type="chain" id="PRO_0000064355" description="20.9 kDa protein">
    <location>
        <begin position="1"/>
        <end position="184"/>
    </location>
</feature>